<sequence length="557" mass="61195">MSNPRHNEREVRSPRGDELNAKSWLTEAPLRMLMNNLDPDVAERPHELVVYGGIGRAARTWDDFDKIVATLKTLNEDETLLVQSGKPVGVFRTHKDAPRVLIANSNLVPHWATWDHFNELDKKGLAMYGQMTAGSWIYIGAQGIVQGTYETFVEAGRQHYDGNLKGKWILTGGLGGMGGAQPLAAVMAGACCLAVECDETRADFRLRTRYVDEKTHSLDEALAKIDEWTKAGEAKSIALIGNAAEIYPELVKRGVRPDIVTDQTSAHDPVHGYLPIGWTVAEWRAKQESDPKGVAKAARASMKVQVQAMLDFWNAGIPTVDYGNNIRQMALEEGLENAFDFPGFVPAYIRPLFCRGVGPFRWAALSGDPEDIAKTDAKVKELLPDNKHLHNWLDMAKERIEFQGLPARICWVGLGDRHRLGLAFNEMVRNGELKAPIVIGRDHLDSGSVASPNRETEAMKDGSDAVSDWPLLNALLNTASGATWVSLHHGGGVGMGFSQHSGMVICCDGTEDADQRIGRVLWNDPATGVMRHADAGYDIALDWAKQQGLRLPAILGN</sequence>
<organism>
    <name type="scientific">Brucella anthropi (strain ATCC 49188 / DSM 6882 / CCUG 24695 / JCM 21032 / LMG 3331 / NBRC 15819 / NCTC 12168 / Alc 37)</name>
    <name type="common">Ochrobactrum anthropi</name>
    <dbReference type="NCBI Taxonomy" id="439375"/>
    <lineage>
        <taxon>Bacteria</taxon>
        <taxon>Pseudomonadati</taxon>
        <taxon>Pseudomonadota</taxon>
        <taxon>Alphaproteobacteria</taxon>
        <taxon>Hyphomicrobiales</taxon>
        <taxon>Brucellaceae</taxon>
        <taxon>Brucella/Ochrobactrum group</taxon>
        <taxon>Brucella</taxon>
    </lineage>
</organism>
<dbReference type="EC" id="4.2.1.49" evidence="1"/>
<dbReference type="EMBL" id="CP000758">
    <property type="protein sequence ID" value="ABS14150.1"/>
    <property type="molecule type" value="Genomic_DNA"/>
</dbReference>
<dbReference type="RefSeq" id="WP_012091498.1">
    <property type="nucleotide sequence ID" value="NC_009667.1"/>
</dbReference>
<dbReference type="SMR" id="A6WYU6"/>
<dbReference type="STRING" id="439375.Oant_1433"/>
<dbReference type="KEGG" id="oan:Oant_1433"/>
<dbReference type="PATRIC" id="fig|439375.7.peg.1502"/>
<dbReference type="eggNOG" id="COG2987">
    <property type="taxonomic scope" value="Bacteria"/>
</dbReference>
<dbReference type="HOGENOM" id="CLU_018868_0_1_5"/>
<dbReference type="PhylomeDB" id="A6WYU6"/>
<dbReference type="UniPathway" id="UPA00379">
    <property type="reaction ID" value="UER00550"/>
</dbReference>
<dbReference type="Proteomes" id="UP000002301">
    <property type="component" value="Chromosome 1"/>
</dbReference>
<dbReference type="GO" id="GO:0005737">
    <property type="term" value="C:cytoplasm"/>
    <property type="evidence" value="ECO:0007669"/>
    <property type="project" value="UniProtKB-SubCell"/>
</dbReference>
<dbReference type="GO" id="GO:0016153">
    <property type="term" value="F:urocanate hydratase activity"/>
    <property type="evidence" value="ECO:0007669"/>
    <property type="project" value="UniProtKB-UniRule"/>
</dbReference>
<dbReference type="GO" id="GO:0019556">
    <property type="term" value="P:L-histidine catabolic process to glutamate and formamide"/>
    <property type="evidence" value="ECO:0007669"/>
    <property type="project" value="UniProtKB-UniPathway"/>
</dbReference>
<dbReference type="GO" id="GO:0019557">
    <property type="term" value="P:L-histidine catabolic process to glutamate and formate"/>
    <property type="evidence" value="ECO:0007669"/>
    <property type="project" value="UniProtKB-UniPathway"/>
</dbReference>
<dbReference type="FunFam" id="3.40.50.10730:FF:000001">
    <property type="entry name" value="Urocanate hydratase"/>
    <property type="match status" value="1"/>
</dbReference>
<dbReference type="Gene3D" id="3.40.50.10730">
    <property type="entry name" value="Urocanase like domains"/>
    <property type="match status" value="1"/>
</dbReference>
<dbReference type="Gene3D" id="3.40.1770.10">
    <property type="entry name" value="Urocanase superfamily"/>
    <property type="match status" value="1"/>
</dbReference>
<dbReference type="HAMAP" id="MF_00577">
    <property type="entry name" value="HutU"/>
    <property type="match status" value="1"/>
</dbReference>
<dbReference type="InterPro" id="IPR055351">
    <property type="entry name" value="Urocanase"/>
</dbReference>
<dbReference type="InterPro" id="IPR023637">
    <property type="entry name" value="Urocanase-like"/>
</dbReference>
<dbReference type="InterPro" id="IPR035401">
    <property type="entry name" value="Urocanase_C"/>
</dbReference>
<dbReference type="InterPro" id="IPR038364">
    <property type="entry name" value="Urocanase_central_sf"/>
</dbReference>
<dbReference type="InterPro" id="IPR023636">
    <property type="entry name" value="Urocanase_CS"/>
</dbReference>
<dbReference type="InterPro" id="IPR035400">
    <property type="entry name" value="Urocanase_N"/>
</dbReference>
<dbReference type="InterPro" id="IPR035085">
    <property type="entry name" value="Urocanase_Rossmann-like"/>
</dbReference>
<dbReference type="InterPro" id="IPR036190">
    <property type="entry name" value="Urocanase_sf"/>
</dbReference>
<dbReference type="NCBIfam" id="TIGR01228">
    <property type="entry name" value="hutU"/>
    <property type="match status" value="1"/>
</dbReference>
<dbReference type="NCBIfam" id="NF003820">
    <property type="entry name" value="PRK05414.1"/>
    <property type="match status" value="1"/>
</dbReference>
<dbReference type="PANTHER" id="PTHR12216">
    <property type="entry name" value="UROCANATE HYDRATASE"/>
    <property type="match status" value="1"/>
</dbReference>
<dbReference type="PANTHER" id="PTHR12216:SF4">
    <property type="entry name" value="UROCANATE HYDRATASE"/>
    <property type="match status" value="1"/>
</dbReference>
<dbReference type="Pfam" id="PF01175">
    <property type="entry name" value="Urocanase"/>
    <property type="match status" value="1"/>
</dbReference>
<dbReference type="Pfam" id="PF17392">
    <property type="entry name" value="Urocanase_C"/>
    <property type="match status" value="1"/>
</dbReference>
<dbReference type="Pfam" id="PF17391">
    <property type="entry name" value="Urocanase_N"/>
    <property type="match status" value="1"/>
</dbReference>
<dbReference type="PIRSF" id="PIRSF001423">
    <property type="entry name" value="Urocanate_hydrat"/>
    <property type="match status" value="1"/>
</dbReference>
<dbReference type="SUPFAM" id="SSF111326">
    <property type="entry name" value="Urocanase"/>
    <property type="match status" value="1"/>
</dbReference>
<dbReference type="PROSITE" id="PS01233">
    <property type="entry name" value="UROCANASE"/>
    <property type="match status" value="1"/>
</dbReference>
<protein>
    <recommendedName>
        <fullName evidence="1">Urocanate hydratase</fullName>
        <shortName evidence="1">Urocanase</shortName>
        <ecNumber evidence="1">4.2.1.49</ecNumber>
    </recommendedName>
    <alternativeName>
        <fullName evidence="1">Imidazolonepropionate hydrolase</fullName>
    </alternativeName>
</protein>
<evidence type="ECO:0000255" key="1">
    <source>
        <dbReference type="HAMAP-Rule" id="MF_00577"/>
    </source>
</evidence>
<evidence type="ECO:0000256" key="2">
    <source>
        <dbReference type="SAM" id="MobiDB-lite"/>
    </source>
</evidence>
<accession>A6WYU6</accession>
<gene>
    <name evidence="1" type="primary">hutU</name>
    <name type="ordered locus">Oant_1433</name>
</gene>
<reference key="1">
    <citation type="journal article" date="2011" name="J. Bacteriol.">
        <title>Genome of Ochrobactrum anthropi ATCC 49188 T, a versatile opportunistic pathogen and symbiont of several eukaryotic hosts.</title>
        <authorList>
            <person name="Chain P.S."/>
            <person name="Lang D.M."/>
            <person name="Comerci D.J."/>
            <person name="Malfatti S.A."/>
            <person name="Vergez L.M."/>
            <person name="Shin M."/>
            <person name="Ugalde R.A."/>
            <person name="Garcia E."/>
            <person name="Tolmasky M.E."/>
        </authorList>
    </citation>
    <scope>NUCLEOTIDE SEQUENCE [LARGE SCALE GENOMIC DNA]</scope>
    <source>
        <strain>ATCC 49188 / DSM 6882 / CCUG 24695 / JCM 21032 / LMG 3331 / NBRC 15819 / NCTC 12168 / Alc 37</strain>
    </source>
</reference>
<name>HUTU_BRUA4</name>
<proteinExistence type="inferred from homology"/>
<keyword id="KW-0963">Cytoplasm</keyword>
<keyword id="KW-0369">Histidine metabolism</keyword>
<keyword id="KW-0456">Lyase</keyword>
<keyword id="KW-0520">NAD</keyword>
<keyword id="KW-1185">Reference proteome</keyword>
<feature type="chain" id="PRO_1000025136" description="Urocanate hydratase">
    <location>
        <begin position="1"/>
        <end position="557"/>
    </location>
</feature>
<feature type="region of interest" description="Disordered" evidence="2">
    <location>
        <begin position="1"/>
        <end position="20"/>
    </location>
</feature>
<feature type="active site" evidence="1">
    <location>
        <position position="410"/>
    </location>
</feature>
<feature type="binding site" evidence="1">
    <location>
        <begin position="52"/>
        <end position="53"/>
    </location>
    <ligand>
        <name>NAD(+)</name>
        <dbReference type="ChEBI" id="CHEBI:57540"/>
    </ligand>
</feature>
<feature type="binding site" evidence="1">
    <location>
        <position position="130"/>
    </location>
    <ligand>
        <name>NAD(+)</name>
        <dbReference type="ChEBI" id="CHEBI:57540"/>
    </ligand>
</feature>
<feature type="binding site" evidence="1">
    <location>
        <begin position="176"/>
        <end position="178"/>
    </location>
    <ligand>
        <name>NAD(+)</name>
        <dbReference type="ChEBI" id="CHEBI:57540"/>
    </ligand>
</feature>
<feature type="binding site" evidence="1">
    <location>
        <position position="196"/>
    </location>
    <ligand>
        <name>NAD(+)</name>
        <dbReference type="ChEBI" id="CHEBI:57540"/>
    </ligand>
</feature>
<feature type="binding site" evidence="1">
    <location>
        <position position="201"/>
    </location>
    <ligand>
        <name>NAD(+)</name>
        <dbReference type="ChEBI" id="CHEBI:57540"/>
    </ligand>
</feature>
<feature type="binding site" evidence="1">
    <location>
        <begin position="242"/>
        <end position="243"/>
    </location>
    <ligand>
        <name>NAD(+)</name>
        <dbReference type="ChEBI" id="CHEBI:57540"/>
    </ligand>
</feature>
<feature type="binding site" evidence="1">
    <location>
        <begin position="263"/>
        <end position="267"/>
    </location>
    <ligand>
        <name>NAD(+)</name>
        <dbReference type="ChEBI" id="CHEBI:57540"/>
    </ligand>
</feature>
<feature type="binding site" evidence="1">
    <location>
        <begin position="273"/>
        <end position="274"/>
    </location>
    <ligand>
        <name>NAD(+)</name>
        <dbReference type="ChEBI" id="CHEBI:57540"/>
    </ligand>
</feature>
<feature type="binding site" evidence="1">
    <location>
        <position position="322"/>
    </location>
    <ligand>
        <name>NAD(+)</name>
        <dbReference type="ChEBI" id="CHEBI:57540"/>
    </ligand>
</feature>
<feature type="binding site" evidence="1">
    <location>
        <position position="492"/>
    </location>
    <ligand>
        <name>NAD(+)</name>
        <dbReference type="ChEBI" id="CHEBI:57540"/>
    </ligand>
</feature>
<comment type="function">
    <text evidence="1">Catalyzes the conversion of urocanate to 4-imidazolone-5-propionate.</text>
</comment>
<comment type="catalytic activity">
    <reaction evidence="1">
        <text>4-imidazolone-5-propanoate = trans-urocanate + H2O</text>
        <dbReference type="Rhea" id="RHEA:13101"/>
        <dbReference type="ChEBI" id="CHEBI:15377"/>
        <dbReference type="ChEBI" id="CHEBI:17771"/>
        <dbReference type="ChEBI" id="CHEBI:77893"/>
        <dbReference type="EC" id="4.2.1.49"/>
    </reaction>
</comment>
<comment type="cofactor">
    <cofactor evidence="1">
        <name>NAD(+)</name>
        <dbReference type="ChEBI" id="CHEBI:57540"/>
    </cofactor>
    <text evidence="1">Binds 1 NAD(+) per subunit.</text>
</comment>
<comment type="pathway">
    <text evidence="1">Amino-acid degradation; L-histidine degradation into L-glutamate; N-formimidoyl-L-glutamate from L-histidine: step 2/3.</text>
</comment>
<comment type="subcellular location">
    <subcellularLocation>
        <location evidence="1">Cytoplasm</location>
    </subcellularLocation>
</comment>
<comment type="similarity">
    <text evidence="1">Belongs to the urocanase family.</text>
</comment>